<gene>
    <name evidence="1" type="primary">zapA</name>
    <name type="ordered locus">YPN_3111</name>
    <name type="ORF">YP516_3530</name>
</gene>
<reference key="1">
    <citation type="journal article" date="2006" name="J. Bacteriol.">
        <title>Complete genome sequence of Yersinia pestis strains Antiqua and Nepal516: evidence of gene reduction in an emerging pathogen.</title>
        <authorList>
            <person name="Chain P.S.G."/>
            <person name="Hu P."/>
            <person name="Malfatti S.A."/>
            <person name="Radnedge L."/>
            <person name="Larimer F."/>
            <person name="Vergez L.M."/>
            <person name="Worsham P."/>
            <person name="Chu M.C."/>
            <person name="Andersen G.L."/>
        </authorList>
    </citation>
    <scope>NUCLEOTIDE SEQUENCE [LARGE SCALE GENOMIC DNA]</scope>
    <source>
        <strain>Nepal516</strain>
    </source>
</reference>
<reference key="2">
    <citation type="submission" date="2009-04" db="EMBL/GenBank/DDBJ databases">
        <title>Yersinia pestis Nepal516A whole genome shotgun sequencing project.</title>
        <authorList>
            <person name="Plunkett G. III"/>
            <person name="Anderson B.D."/>
            <person name="Baumler D.J."/>
            <person name="Burland V."/>
            <person name="Cabot E.L."/>
            <person name="Glasner J.D."/>
            <person name="Mau B."/>
            <person name="Neeno-Eckwall E."/>
            <person name="Perna N.T."/>
            <person name="Munk A.C."/>
            <person name="Tapia R."/>
            <person name="Green L.D."/>
            <person name="Rogers Y.C."/>
            <person name="Detter J.C."/>
            <person name="Bruce D.C."/>
            <person name="Brettin T.S."/>
        </authorList>
    </citation>
    <scope>NUCLEOTIDE SEQUENCE [LARGE SCALE GENOMIC DNA]</scope>
    <source>
        <strain>Nepal516</strain>
    </source>
</reference>
<proteinExistence type="inferred from homology"/>
<evidence type="ECO:0000255" key="1">
    <source>
        <dbReference type="HAMAP-Rule" id="MF_02012"/>
    </source>
</evidence>
<name>ZAPA_YERPN</name>
<feature type="chain" id="PRO_0000345669" description="Cell division protein ZapA">
    <location>
        <begin position="1"/>
        <end position="109"/>
    </location>
</feature>
<feature type="coiled-coil region" evidence="1">
    <location>
        <begin position="22"/>
        <end position="99"/>
    </location>
</feature>
<dbReference type="EMBL" id="CP000305">
    <property type="protein sequence ID" value="ABG19438.1"/>
    <property type="molecule type" value="Genomic_DNA"/>
</dbReference>
<dbReference type="EMBL" id="ACNQ01000017">
    <property type="protein sequence ID" value="EEO75601.1"/>
    <property type="molecule type" value="Genomic_DNA"/>
</dbReference>
<dbReference type="PIR" id="AI0111">
    <property type="entry name" value="AI0111"/>
</dbReference>
<dbReference type="RefSeq" id="WP_002209954.1">
    <property type="nucleotide sequence ID" value="NZ_ACNQ01000017.1"/>
</dbReference>
<dbReference type="SMR" id="Q1CEZ2"/>
<dbReference type="GeneID" id="96662508"/>
<dbReference type="KEGG" id="ypn:YPN_3111"/>
<dbReference type="HOGENOM" id="CLU_116623_3_0_6"/>
<dbReference type="Proteomes" id="UP000008936">
    <property type="component" value="Chromosome"/>
</dbReference>
<dbReference type="GO" id="GO:0032153">
    <property type="term" value="C:cell division site"/>
    <property type="evidence" value="ECO:0007669"/>
    <property type="project" value="TreeGrafter"/>
</dbReference>
<dbReference type="GO" id="GO:0030428">
    <property type="term" value="C:cell septum"/>
    <property type="evidence" value="ECO:0007669"/>
    <property type="project" value="TreeGrafter"/>
</dbReference>
<dbReference type="GO" id="GO:0005829">
    <property type="term" value="C:cytosol"/>
    <property type="evidence" value="ECO:0007669"/>
    <property type="project" value="TreeGrafter"/>
</dbReference>
<dbReference type="GO" id="GO:0005886">
    <property type="term" value="C:plasma membrane"/>
    <property type="evidence" value="ECO:0007669"/>
    <property type="project" value="UniProtKB-UniRule"/>
</dbReference>
<dbReference type="GO" id="GO:0000917">
    <property type="term" value="P:division septum assembly"/>
    <property type="evidence" value="ECO:0007669"/>
    <property type="project" value="UniProtKB-KW"/>
</dbReference>
<dbReference type="GO" id="GO:0043093">
    <property type="term" value="P:FtsZ-dependent cytokinesis"/>
    <property type="evidence" value="ECO:0007669"/>
    <property type="project" value="TreeGrafter"/>
</dbReference>
<dbReference type="GO" id="GO:0000921">
    <property type="term" value="P:septin ring assembly"/>
    <property type="evidence" value="ECO:0007669"/>
    <property type="project" value="TreeGrafter"/>
</dbReference>
<dbReference type="FunFam" id="1.20.5.50:FF:000001">
    <property type="entry name" value="Cell division protein ZapA"/>
    <property type="match status" value="1"/>
</dbReference>
<dbReference type="FunFam" id="3.30.160.880:FF:000001">
    <property type="entry name" value="Cell division protein ZapA"/>
    <property type="match status" value="1"/>
</dbReference>
<dbReference type="Gene3D" id="1.20.5.50">
    <property type="match status" value="1"/>
</dbReference>
<dbReference type="Gene3D" id="3.30.160.880">
    <property type="entry name" value="Cell division protein ZapA protomer, N-terminal domain"/>
    <property type="match status" value="1"/>
</dbReference>
<dbReference type="HAMAP" id="MF_02012">
    <property type="entry name" value="ZapA_type1"/>
    <property type="match status" value="1"/>
</dbReference>
<dbReference type="InterPro" id="IPR007838">
    <property type="entry name" value="Cell_div_ZapA-like"/>
</dbReference>
<dbReference type="InterPro" id="IPR036192">
    <property type="entry name" value="Cell_div_ZapA-like_sf"/>
</dbReference>
<dbReference type="InterPro" id="IPR023771">
    <property type="entry name" value="Cell_div_ZapA_eubact"/>
</dbReference>
<dbReference type="InterPro" id="IPR042233">
    <property type="entry name" value="Cell_div_ZapA_N"/>
</dbReference>
<dbReference type="NCBIfam" id="NF008209">
    <property type="entry name" value="PRK10972.1"/>
    <property type="match status" value="1"/>
</dbReference>
<dbReference type="PANTHER" id="PTHR34981">
    <property type="entry name" value="CELL DIVISION PROTEIN ZAPA"/>
    <property type="match status" value="1"/>
</dbReference>
<dbReference type="PANTHER" id="PTHR34981:SF1">
    <property type="entry name" value="CELL DIVISION PROTEIN ZAPA"/>
    <property type="match status" value="1"/>
</dbReference>
<dbReference type="Pfam" id="PF05164">
    <property type="entry name" value="ZapA"/>
    <property type="match status" value="1"/>
</dbReference>
<dbReference type="SUPFAM" id="SSF102829">
    <property type="entry name" value="Cell division protein ZapA-like"/>
    <property type="match status" value="1"/>
</dbReference>
<organism>
    <name type="scientific">Yersinia pestis bv. Antiqua (strain Nepal516)</name>
    <dbReference type="NCBI Taxonomy" id="377628"/>
    <lineage>
        <taxon>Bacteria</taxon>
        <taxon>Pseudomonadati</taxon>
        <taxon>Pseudomonadota</taxon>
        <taxon>Gammaproteobacteria</taxon>
        <taxon>Enterobacterales</taxon>
        <taxon>Yersiniaceae</taxon>
        <taxon>Yersinia</taxon>
    </lineage>
</organism>
<sequence length="109" mass="12643">MSAQPVDIQVFGRSLRVNCPPEQQDALNMAAEDLSQRLQDLKVRTRVNNTEQLVFIAALNVCHELAQERLKTRDYASNMEQRIRMLQQTIEQALLEQGRISDRQDTQFE</sequence>
<keyword id="KW-0131">Cell cycle</keyword>
<keyword id="KW-0132">Cell division</keyword>
<keyword id="KW-0175">Coiled coil</keyword>
<keyword id="KW-0963">Cytoplasm</keyword>
<keyword id="KW-0717">Septation</keyword>
<accession>Q1CEZ2</accession>
<accession>C4GXF1</accession>
<protein>
    <recommendedName>
        <fullName evidence="1">Cell division protein ZapA</fullName>
    </recommendedName>
    <alternativeName>
        <fullName evidence="1">Z ring-associated protein ZapA</fullName>
    </alternativeName>
</protein>
<comment type="function">
    <text evidence="1">Activator of cell division through the inhibition of FtsZ GTPase activity, therefore promoting FtsZ assembly into bundles of protofilaments necessary for the formation of the division Z ring. It is recruited early at mid-cell but it is not essential for cell division.</text>
</comment>
<comment type="subunit">
    <text evidence="1">Homodimer. Interacts with FtsZ.</text>
</comment>
<comment type="subcellular location">
    <subcellularLocation>
        <location evidence="1">Cytoplasm</location>
    </subcellularLocation>
    <text evidence="1">Localizes at mid-cell.</text>
</comment>
<comment type="similarity">
    <text evidence="1">Belongs to the ZapA family. Type 1 subfamily.</text>
</comment>